<comment type="similarity">
    <text evidence="1">Belongs to the mab-21 family.</text>
</comment>
<comment type="caution">
    <text evidence="1">It is uncertain whether Met-1 or Met-7 is the initiator.</text>
</comment>
<gene>
    <name type="ORF">AGAP001033</name>
</gene>
<feature type="chain" id="PRO_0000312798" description="Protein mab-21-like">
    <location>
        <begin position="1"/>
        <end position="365"/>
    </location>
</feature>
<organism>
    <name type="scientific">Anopheles gambiae</name>
    <name type="common">African malaria mosquito</name>
    <dbReference type="NCBI Taxonomy" id="7165"/>
    <lineage>
        <taxon>Eukaryota</taxon>
        <taxon>Metazoa</taxon>
        <taxon>Ecdysozoa</taxon>
        <taxon>Arthropoda</taxon>
        <taxon>Hexapoda</taxon>
        <taxon>Insecta</taxon>
        <taxon>Pterygota</taxon>
        <taxon>Neoptera</taxon>
        <taxon>Endopterygota</taxon>
        <taxon>Diptera</taxon>
        <taxon>Nematocera</taxon>
        <taxon>Culicoidea</taxon>
        <taxon>Culicidae</taxon>
        <taxon>Anophelinae</taxon>
        <taxon>Anopheles</taxon>
    </lineage>
</organism>
<keyword id="KW-1185">Reference proteome</keyword>
<protein>
    <recommendedName>
        <fullName>Protein mab-21-like</fullName>
    </recommendedName>
</protein>
<proteinExistence type="inferred from homology"/>
<sequence length="365" mass="41755">MLVPQDMVTVQSKTIFQINKYYAEKVQVRMGNIALVLREICKIVQEVLREVEVQEPRFISSLVECNGRYEGLEVISPTAFEVVLYLNQMGVFNFVDDGSLPGAAVLKLSDGRKRSMSLWVEFITASGYLSARKIRSRFHTLVAQAVEKCPYRDMVKLVPDTTEVKLRIRERYTVQITPAFKCTGIWPRSAAHWPILNIPWPHPALVAEVKTEGFDLLSKESVILQGKNANVEGDAWLLHFTEAENRLLQGGYRKRCLSILKTLCDRHLELPGVPIGYYHLKTLLLYECEKHPRETEWDAGCVADRLNGIFLQLISCLQCRRCPHYFLPSLDLFKGKSPTVLDNASKHVWRLCRDILTSSKAFDRL</sequence>
<accession>Q7QHX4</accession>
<reference key="1">
    <citation type="journal article" date="2002" name="Science">
        <title>The genome sequence of the malaria mosquito Anopheles gambiae.</title>
        <authorList>
            <person name="Holt R.A."/>
            <person name="Subramanian G.M."/>
            <person name="Halpern A."/>
            <person name="Sutton G.G."/>
            <person name="Charlab R."/>
            <person name="Nusskern D.R."/>
            <person name="Wincker P."/>
            <person name="Clark A.G."/>
            <person name="Ribeiro J.M.C."/>
            <person name="Wides R."/>
            <person name="Salzberg S.L."/>
            <person name="Loftus B.J."/>
            <person name="Yandell M.D."/>
            <person name="Majoros W.H."/>
            <person name="Rusch D.B."/>
            <person name="Lai Z."/>
            <person name="Kraft C.L."/>
            <person name="Abril J.F."/>
            <person name="Anthouard V."/>
            <person name="Arensburger P."/>
            <person name="Atkinson P.W."/>
            <person name="Baden H."/>
            <person name="de Berardinis V."/>
            <person name="Baldwin D."/>
            <person name="Benes V."/>
            <person name="Biedler J."/>
            <person name="Blass C."/>
            <person name="Bolanos R."/>
            <person name="Boscus D."/>
            <person name="Barnstead M."/>
            <person name="Cai S."/>
            <person name="Center A."/>
            <person name="Chaturverdi K."/>
            <person name="Christophides G.K."/>
            <person name="Chrystal M.A.M."/>
            <person name="Clamp M."/>
            <person name="Cravchik A."/>
            <person name="Curwen V."/>
            <person name="Dana A."/>
            <person name="Delcher A."/>
            <person name="Dew I."/>
            <person name="Evans C.A."/>
            <person name="Flanigan M."/>
            <person name="Grundschober-Freimoser A."/>
            <person name="Friedli L."/>
            <person name="Gu Z."/>
            <person name="Guan P."/>
            <person name="Guigo R."/>
            <person name="Hillenmeyer M.E."/>
            <person name="Hladun S.L."/>
            <person name="Hogan J.R."/>
            <person name="Hong Y.S."/>
            <person name="Hoover J."/>
            <person name="Jaillon O."/>
            <person name="Ke Z."/>
            <person name="Kodira C.D."/>
            <person name="Kokoza E."/>
            <person name="Koutsos A."/>
            <person name="Letunic I."/>
            <person name="Levitsky A.A."/>
            <person name="Liang Y."/>
            <person name="Lin J.-J."/>
            <person name="Lobo N.F."/>
            <person name="Lopez J.R."/>
            <person name="Malek J.A."/>
            <person name="McIntosh T.C."/>
            <person name="Meister S."/>
            <person name="Miller J.R."/>
            <person name="Mobarry C."/>
            <person name="Mongin E."/>
            <person name="Murphy S.D."/>
            <person name="O'Brochta D.A."/>
            <person name="Pfannkoch C."/>
            <person name="Qi R."/>
            <person name="Regier M.A."/>
            <person name="Remington K."/>
            <person name="Shao H."/>
            <person name="Sharakhova M.V."/>
            <person name="Sitter C.D."/>
            <person name="Shetty J."/>
            <person name="Smith T.J."/>
            <person name="Strong R."/>
            <person name="Sun J."/>
            <person name="Thomasova D."/>
            <person name="Ton L.Q."/>
            <person name="Topalis P."/>
            <person name="Tu Z.J."/>
            <person name="Unger M.F."/>
            <person name="Walenz B."/>
            <person name="Wang A.H."/>
            <person name="Wang J."/>
            <person name="Wang M."/>
            <person name="Wang X."/>
            <person name="Woodford K.J."/>
            <person name="Wortman J.R."/>
            <person name="Wu M."/>
            <person name="Yao A."/>
            <person name="Zdobnov E.M."/>
            <person name="Zhang H."/>
            <person name="Zhao Q."/>
            <person name="Zhao S."/>
            <person name="Zhu S.C."/>
            <person name="Zhimulev I."/>
            <person name="Coluzzi M."/>
            <person name="della Torre A."/>
            <person name="Roth C.W."/>
            <person name="Louis C."/>
            <person name="Kalush F."/>
            <person name="Mural R.J."/>
            <person name="Myers E.W."/>
            <person name="Adams M.D."/>
            <person name="Smith H.O."/>
            <person name="Broder S."/>
            <person name="Gardner M.J."/>
            <person name="Fraser C.M."/>
            <person name="Birney E."/>
            <person name="Bork P."/>
            <person name="Brey P.T."/>
            <person name="Venter J.C."/>
            <person name="Weissenbach J."/>
            <person name="Kafatos F.C."/>
            <person name="Collins F.H."/>
            <person name="Hoffman S.L."/>
        </authorList>
    </citation>
    <scope>NUCLEOTIDE SEQUENCE [LARGE SCALE GENOMIC DNA]</scope>
    <source>
        <strain>PEST</strain>
    </source>
</reference>
<dbReference type="EMBL" id="AAAB01008811">
    <property type="protein sequence ID" value="EAA04948.3"/>
    <property type="molecule type" value="Genomic_DNA"/>
</dbReference>
<dbReference type="RefSeq" id="XP_309230.3">
    <property type="nucleotide sequence ID" value="XM_309230.4"/>
</dbReference>
<dbReference type="SMR" id="Q7QHX4"/>
<dbReference type="FunCoup" id="Q7QHX4">
    <property type="interactions" value="138"/>
</dbReference>
<dbReference type="STRING" id="7165.Q7QHX4"/>
<dbReference type="PaxDb" id="7165-AGAP001033-PA"/>
<dbReference type="EnsemblMetazoa" id="AGAP001033-RA">
    <property type="protein sequence ID" value="AGAP001033-PA"/>
    <property type="gene ID" value="AGAP001033"/>
</dbReference>
<dbReference type="GeneID" id="1270524"/>
<dbReference type="KEGG" id="aga:1270524"/>
<dbReference type="VEuPathDB" id="VectorBase:AGAMI1_010319"/>
<dbReference type="VEuPathDB" id="VectorBase:AGAP001033"/>
<dbReference type="eggNOG" id="KOG3963">
    <property type="taxonomic scope" value="Eukaryota"/>
</dbReference>
<dbReference type="HOGENOM" id="CLU_045315_0_0_1"/>
<dbReference type="InParanoid" id="Q7QHX4"/>
<dbReference type="OMA" id="WDESCIA"/>
<dbReference type="PhylomeDB" id="Q7QHX4"/>
<dbReference type="Proteomes" id="UP000007062">
    <property type="component" value="Chromosome X"/>
</dbReference>
<dbReference type="FunFam" id="3.30.460.90:FF:000001">
    <property type="entry name" value="protein mab-21-like 2"/>
    <property type="match status" value="1"/>
</dbReference>
<dbReference type="Gene3D" id="1.10.1410.40">
    <property type="match status" value="1"/>
</dbReference>
<dbReference type="Gene3D" id="3.30.460.90">
    <property type="match status" value="1"/>
</dbReference>
<dbReference type="InterPro" id="IPR046903">
    <property type="entry name" value="Mab-21-like_nuc_Trfase"/>
</dbReference>
<dbReference type="InterPro" id="IPR046906">
    <property type="entry name" value="Mab-21_HhH/H2TH-like"/>
</dbReference>
<dbReference type="InterPro" id="IPR024810">
    <property type="entry name" value="MAB21L/cGLR"/>
</dbReference>
<dbReference type="PANTHER" id="PTHR10656">
    <property type="entry name" value="CELL FATE DETERMINING PROTEIN MAB21-RELATED"/>
    <property type="match status" value="1"/>
</dbReference>
<dbReference type="PANTHER" id="PTHR10656:SF70">
    <property type="entry name" value="PROTEIN MAB-21-RELATED"/>
    <property type="match status" value="1"/>
</dbReference>
<dbReference type="Pfam" id="PF03281">
    <property type="entry name" value="Mab-21"/>
    <property type="match status" value="1"/>
</dbReference>
<dbReference type="Pfam" id="PF20266">
    <property type="entry name" value="Mab-21_C"/>
    <property type="match status" value="1"/>
</dbReference>
<dbReference type="SMART" id="SM01265">
    <property type="entry name" value="Mab-21"/>
    <property type="match status" value="1"/>
</dbReference>
<name>MB21L_ANOGA</name>
<evidence type="ECO:0000305" key="1"/>